<keyword id="KW-0472">Membrane</keyword>
<keyword id="KW-1185">Reference proteome</keyword>
<keyword id="KW-0812">Transmembrane</keyword>
<keyword id="KW-1133">Transmembrane helix</keyword>
<comment type="subcellular location">
    <subcellularLocation>
        <location evidence="2">Membrane</location>
        <topology evidence="2">Multi-pass membrane protein</topology>
    </subcellularLocation>
</comment>
<comment type="similarity">
    <text evidence="2">Belongs to the AIM11 family.</text>
</comment>
<gene>
    <name type="primary">AIM11</name>
    <name type="ORF">CTRG_02641</name>
</gene>
<sequence length="159" mass="17850">MSTFLQSFKISQASDEYKQRRKTQMLKFFTASAITILTSRFAYRSTIARQYVPTLFQGNHSPPLSYNFTTDAAVAVATGTILCGSVSSMLVLGGFWILDVSNLGEFGWRMKEKLGGLEKEKHLGEMEMDEESRYIQDSLNDLLDGKYDFEEEGGNNSVA</sequence>
<feature type="chain" id="PRO_0000405645" description="Altered inheritance of mitochondria protein 11">
    <location>
        <begin position="1"/>
        <end position="159"/>
    </location>
</feature>
<feature type="transmembrane region" description="Helical" evidence="1">
    <location>
        <begin position="25"/>
        <end position="43"/>
    </location>
</feature>
<feature type="transmembrane region" description="Helical" evidence="1">
    <location>
        <begin position="74"/>
        <end position="98"/>
    </location>
</feature>
<dbReference type="EMBL" id="GG692397">
    <property type="protein sequence ID" value="EER33823.1"/>
    <property type="molecule type" value="Genomic_DNA"/>
</dbReference>
<dbReference type="RefSeq" id="XP_002548344.1">
    <property type="nucleotide sequence ID" value="XM_002548298.1"/>
</dbReference>
<dbReference type="EnsemblFungi" id="CTRG_02641-t43_1">
    <property type="protein sequence ID" value="CTRG_02641-t43_1-p1"/>
    <property type="gene ID" value="CTRG_02641"/>
</dbReference>
<dbReference type="GeneID" id="8297364"/>
<dbReference type="KEGG" id="ctp:CTRG_02641"/>
<dbReference type="VEuPathDB" id="FungiDB:CTRG_02641"/>
<dbReference type="eggNOG" id="ENOG502SAK0">
    <property type="taxonomic scope" value="Eukaryota"/>
</dbReference>
<dbReference type="HOGENOM" id="CLU_118700_0_0_1"/>
<dbReference type="OrthoDB" id="4088121at2759"/>
<dbReference type="Proteomes" id="UP000002037">
    <property type="component" value="Unassembled WGS sequence"/>
</dbReference>
<dbReference type="GO" id="GO:0016020">
    <property type="term" value="C:membrane"/>
    <property type="evidence" value="ECO:0007669"/>
    <property type="project" value="UniProtKB-SubCell"/>
</dbReference>
<dbReference type="GO" id="GO:0005739">
    <property type="term" value="C:mitochondrion"/>
    <property type="evidence" value="ECO:0007669"/>
    <property type="project" value="TreeGrafter"/>
</dbReference>
<dbReference type="InterPro" id="IPR038814">
    <property type="entry name" value="AIM11"/>
</dbReference>
<dbReference type="PANTHER" id="PTHR39136">
    <property type="entry name" value="ALTERED INHERITANCE OF MITOCHONDRIA PROTEIN 11"/>
    <property type="match status" value="1"/>
</dbReference>
<dbReference type="PANTHER" id="PTHR39136:SF1">
    <property type="entry name" value="ALTERED INHERITANCE OF MITOCHONDRIA PROTEIN 11"/>
    <property type="match status" value="1"/>
</dbReference>
<reference key="1">
    <citation type="journal article" date="2009" name="Nature">
        <title>Evolution of pathogenicity and sexual reproduction in eight Candida genomes.</title>
        <authorList>
            <person name="Butler G."/>
            <person name="Rasmussen M.D."/>
            <person name="Lin M.F."/>
            <person name="Santos M.A.S."/>
            <person name="Sakthikumar S."/>
            <person name="Munro C.A."/>
            <person name="Rheinbay E."/>
            <person name="Grabherr M."/>
            <person name="Forche A."/>
            <person name="Reedy J.L."/>
            <person name="Agrafioti I."/>
            <person name="Arnaud M.B."/>
            <person name="Bates S."/>
            <person name="Brown A.J.P."/>
            <person name="Brunke S."/>
            <person name="Costanzo M.C."/>
            <person name="Fitzpatrick D.A."/>
            <person name="de Groot P.W.J."/>
            <person name="Harris D."/>
            <person name="Hoyer L.L."/>
            <person name="Hube B."/>
            <person name="Klis F.M."/>
            <person name="Kodira C."/>
            <person name="Lennard N."/>
            <person name="Logue M.E."/>
            <person name="Martin R."/>
            <person name="Neiman A.M."/>
            <person name="Nikolaou E."/>
            <person name="Quail M.A."/>
            <person name="Quinn J."/>
            <person name="Santos M.C."/>
            <person name="Schmitzberger F.F."/>
            <person name="Sherlock G."/>
            <person name="Shah P."/>
            <person name="Silverstein K.A.T."/>
            <person name="Skrzypek M.S."/>
            <person name="Soll D."/>
            <person name="Staggs R."/>
            <person name="Stansfield I."/>
            <person name="Stumpf M.P.H."/>
            <person name="Sudbery P.E."/>
            <person name="Srikantha T."/>
            <person name="Zeng Q."/>
            <person name="Berman J."/>
            <person name="Berriman M."/>
            <person name="Heitman J."/>
            <person name="Gow N.A.R."/>
            <person name="Lorenz M.C."/>
            <person name="Birren B.W."/>
            <person name="Kellis M."/>
            <person name="Cuomo C.A."/>
        </authorList>
    </citation>
    <scope>NUCLEOTIDE SEQUENCE [LARGE SCALE GENOMIC DNA]</scope>
    <source>
        <strain>ATCC MYA-3404 / T1</strain>
    </source>
</reference>
<accession>C5M8B9</accession>
<evidence type="ECO:0000255" key="1"/>
<evidence type="ECO:0000305" key="2"/>
<name>AIM11_CANTT</name>
<protein>
    <recommendedName>
        <fullName>Altered inheritance of mitochondria protein 11</fullName>
    </recommendedName>
</protein>
<proteinExistence type="inferred from homology"/>
<organism>
    <name type="scientific">Candida tropicalis (strain ATCC MYA-3404 / T1)</name>
    <name type="common">Yeast</name>
    <dbReference type="NCBI Taxonomy" id="294747"/>
    <lineage>
        <taxon>Eukaryota</taxon>
        <taxon>Fungi</taxon>
        <taxon>Dikarya</taxon>
        <taxon>Ascomycota</taxon>
        <taxon>Saccharomycotina</taxon>
        <taxon>Pichiomycetes</taxon>
        <taxon>Debaryomycetaceae</taxon>
        <taxon>Candida/Lodderomyces clade</taxon>
        <taxon>Candida</taxon>
    </lineage>
</organism>